<proteinExistence type="inferred from homology"/>
<feature type="chain" id="PRO_1000070129" description="Membrane protein insertase YidC">
    <location>
        <begin position="1"/>
        <end position="545"/>
    </location>
</feature>
<feature type="transmembrane region" description="Helical" evidence="1">
    <location>
        <begin position="6"/>
        <end position="26"/>
    </location>
</feature>
<feature type="transmembrane region" description="Helical" evidence="1">
    <location>
        <begin position="357"/>
        <end position="377"/>
    </location>
</feature>
<feature type="transmembrane region" description="Helical" evidence="1">
    <location>
        <begin position="428"/>
        <end position="448"/>
    </location>
</feature>
<feature type="transmembrane region" description="Helical" evidence="1">
    <location>
        <begin position="505"/>
        <end position="525"/>
    </location>
</feature>
<feature type="region of interest" description="Disordered" evidence="2">
    <location>
        <begin position="34"/>
        <end position="59"/>
    </location>
</feature>
<name>YIDC_NITOC</name>
<comment type="function">
    <text evidence="1">Required for the insertion and/or proper folding and/or complex formation of integral membrane proteins into the membrane. Involved in integration of membrane proteins that insert both dependently and independently of the Sec translocase complex, as well as at least some lipoproteins. Aids folding of multispanning membrane proteins.</text>
</comment>
<comment type="subunit">
    <text evidence="1">Interacts with the Sec translocase complex via SecD. Specifically interacts with transmembrane segments of nascent integral membrane proteins during membrane integration.</text>
</comment>
<comment type="subcellular location">
    <subcellularLocation>
        <location evidence="1">Cell inner membrane</location>
        <topology evidence="1">Multi-pass membrane protein</topology>
    </subcellularLocation>
</comment>
<comment type="similarity">
    <text evidence="1">Belongs to the OXA1/ALB3/YidC family. Type 1 subfamily.</text>
</comment>
<sequence>MENYRLILFSALVLVLFLMWDAWQTDYGPIPLLPPPPQPTASSGESSPVLPEAVPDAPPPEMADMDTAPILTGQKTIEVKTDLLAIKIGMASGDLYEVQLLNYPVSLKKPNEPVTLLHKRDPDLFVTQSGLRAASGPSITHETVQFSAPKTYYELIEDESSLKVPLTWEDENGIKVTKTYIFQRDSYQIDLNIKIENGTDQAWMGRAYAQFSRTPPESGGMFARSYVGAVFSTQEQEYQKVDFGDLASQSFDRRSSGGWVAMIQHYFVAAWVPREQGTNYYYGKHVQNSRYIAGVMPPQQTIAPGESGQFNLALFTGPKIQDQLAAVAPKLNLTVDYGKLTILAEPLFWLMSWFHNLVGNWGWAIVLLTFVVKLVFFKLSQTSYRSMARMRKLQPRLLALKERYGDDRQKVGQAMMELYRKEKVNPMGGCLPIVVQIPVFIALYWMLLESVELRQAPFIFWIQDLTSKDPYYILPLLMGVSMFVQQKLSPAPTDPIQAKVMALMPVMFTVFFVMFPAGLVLYWVVNNILSIAQQWYITRQIEQEG</sequence>
<reference key="1">
    <citation type="journal article" date="2006" name="Appl. Environ. Microbiol.">
        <title>Complete genome sequence of the marine, chemolithoautotrophic, ammonia-oxidizing bacterium Nitrosococcus oceani ATCC 19707.</title>
        <authorList>
            <person name="Klotz M.G."/>
            <person name="Arp D.J."/>
            <person name="Chain P.S.G."/>
            <person name="El-Sheikh A.F."/>
            <person name="Hauser L.J."/>
            <person name="Hommes N.G."/>
            <person name="Larimer F.W."/>
            <person name="Malfatti S.A."/>
            <person name="Norton J.M."/>
            <person name="Poret-Peterson A.T."/>
            <person name="Vergez L.M."/>
            <person name="Ward B.B."/>
        </authorList>
    </citation>
    <scope>NUCLEOTIDE SEQUENCE [LARGE SCALE GENOMIC DNA]</scope>
    <source>
        <strain>ATCC 19707 / BCRC 17464 / JCM 30415 / NCIMB 11848 / C-107</strain>
    </source>
</reference>
<gene>
    <name evidence="1" type="primary">yidC</name>
    <name type="ordered locus">Noc_3087</name>
</gene>
<accession>Q3J6L8</accession>
<dbReference type="EMBL" id="CP000127">
    <property type="protein sequence ID" value="ABA59528.1"/>
    <property type="molecule type" value="Genomic_DNA"/>
</dbReference>
<dbReference type="RefSeq" id="WP_002812674.1">
    <property type="nucleotide sequence ID" value="NC_007484.1"/>
</dbReference>
<dbReference type="SMR" id="Q3J6L8"/>
<dbReference type="FunCoup" id="Q3J6L8">
    <property type="interactions" value="299"/>
</dbReference>
<dbReference type="STRING" id="323261.Noc_3087"/>
<dbReference type="KEGG" id="noc:Noc_3087"/>
<dbReference type="eggNOG" id="COG0706">
    <property type="taxonomic scope" value="Bacteria"/>
</dbReference>
<dbReference type="HOGENOM" id="CLU_016535_3_0_6"/>
<dbReference type="InParanoid" id="Q3J6L8"/>
<dbReference type="Proteomes" id="UP000006838">
    <property type="component" value="Chromosome"/>
</dbReference>
<dbReference type="GO" id="GO:0005886">
    <property type="term" value="C:plasma membrane"/>
    <property type="evidence" value="ECO:0007669"/>
    <property type="project" value="UniProtKB-SubCell"/>
</dbReference>
<dbReference type="GO" id="GO:0032977">
    <property type="term" value="F:membrane insertase activity"/>
    <property type="evidence" value="ECO:0007669"/>
    <property type="project" value="InterPro"/>
</dbReference>
<dbReference type="GO" id="GO:0051205">
    <property type="term" value="P:protein insertion into membrane"/>
    <property type="evidence" value="ECO:0007669"/>
    <property type="project" value="TreeGrafter"/>
</dbReference>
<dbReference type="GO" id="GO:0015031">
    <property type="term" value="P:protein transport"/>
    <property type="evidence" value="ECO:0007669"/>
    <property type="project" value="UniProtKB-KW"/>
</dbReference>
<dbReference type="CDD" id="cd20070">
    <property type="entry name" value="5TM_YidC_Alb3"/>
    <property type="match status" value="1"/>
</dbReference>
<dbReference type="CDD" id="cd19961">
    <property type="entry name" value="EcYidC-like_peri"/>
    <property type="match status" value="1"/>
</dbReference>
<dbReference type="Gene3D" id="2.70.98.90">
    <property type="match status" value="1"/>
</dbReference>
<dbReference type="HAMAP" id="MF_01810">
    <property type="entry name" value="YidC_type1"/>
    <property type="match status" value="1"/>
</dbReference>
<dbReference type="InterPro" id="IPR019998">
    <property type="entry name" value="Membr_insert_YidC"/>
</dbReference>
<dbReference type="InterPro" id="IPR028053">
    <property type="entry name" value="Membr_insert_YidC_N"/>
</dbReference>
<dbReference type="InterPro" id="IPR001708">
    <property type="entry name" value="YidC/ALB3/OXA1/COX18"/>
</dbReference>
<dbReference type="InterPro" id="IPR028055">
    <property type="entry name" value="YidC/Oxa/ALB_C"/>
</dbReference>
<dbReference type="InterPro" id="IPR047196">
    <property type="entry name" value="YidC_ALB_C"/>
</dbReference>
<dbReference type="InterPro" id="IPR038221">
    <property type="entry name" value="YidC_periplasmic_sf"/>
</dbReference>
<dbReference type="NCBIfam" id="NF002352">
    <property type="entry name" value="PRK01318.1-3"/>
    <property type="match status" value="1"/>
</dbReference>
<dbReference type="NCBIfam" id="TIGR03593">
    <property type="entry name" value="yidC_nterm"/>
    <property type="match status" value="1"/>
</dbReference>
<dbReference type="NCBIfam" id="TIGR03592">
    <property type="entry name" value="yidC_oxa1_cterm"/>
    <property type="match status" value="1"/>
</dbReference>
<dbReference type="PANTHER" id="PTHR12428:SF65">
    <property type="entry name" value="CYTOCHROME C OXIDASE ASSEMBLY PROTEIN COX18, MITOCHONDRIAL"/>
    <property type="match status" value="1"/>
</dbReference>
<dbReference type="PANTHER" id="PTHR12428">
    <property type="entry name" value="OXA1"/>
    <property type="match status" value="1"/>
</dbReference>
<dbReference type="Pfam" id="PF02096">
    <property type="entry name" value="60KD_IMP"/>
    <property type="match status" value="1"/>
</dbReference>
<dbReference type="Pfam" id="PF14849">
    <property type="entry name" value="YidC_periplas"/>
    <property type="match status" value="1"/>
</dbReference>
<dbReference type="PRINTS" id="PR00701">
    <property type="entry name" value="60KDINNERMP"/>
</dbReference>
<dbReference type="PRINTS" id="PR01900">
    <property type="entry name" value="YIDCPROTEIN"/>
</dbReference>
<keyword id="KW-0997">Cell inner membrane</keyword>
<keyword id="KW-1003">Cell membrane</keyword>
<keyword id="KW-0143">Chaperone</keyword>
<keyword id="KW-0472">Membrane</keyword>
<keyword id="KW-0653">Protein transport</keyword>
<keyword id="KW-1185">Reference proteome</keyword>
<keyword id="KW-0812">Transmembrane</keyword>
<keyword id="KW-1133">Transmembrane helix</keyword>
<keyword id="KW-0813">Transport</keyword>
<protein>
    <recommendedName>
        <fullName evidence="1">Membrane protein insertase YidC</fullName>
    </recommendedName>
    <alternativeName>
        <fullName evidence="1">Foldase YidC</fullName>
    </alternativeName>
    <alternativeName>
        <fullName evidence="1">Membrane integrase YidC</fullName>
    </alternativeName>
    <alternativeName>
        <fullName evidence="1">Membrane protein YidC</fullName>
    </alternativeName>
</protein>
<evidence type="ECO:0000255" key="1">
    <source>
        <dbReference type="HAMAP-Rule" id="MF_01810"/>
    </source>
</evidence>
<evidence type="ECO:0000256" key="2">
    <source>
        <dbReference type="SAM" id="MobiDB-lite"/>
    </source>
</evidence>
<organism>
    <name type="scientific">Nitrosococcus oceani (strain ATCC 19707 / BCRC 17464 / JCM 30415 / NCIMB 11848 / C-107)</name>
    <dbReference type="NCBI Taxonomy" id="323261"/>
    <lineage>
        <taxon>Bacteria</taxon>
        <taxon>Pseudomonadati</taxon>
        <taxon>Pseudomonadota</taxon>
        <taxon>Gammaproteobacteria</taxon>
        <taxon>Chromatiales</taxon>
        <taxon>Chromatiaceae</taxon>
        <taxon>Nitrosococcus</taxon>
    </lineage>
</organism>